<proteinExistence type="inferred from homology"/>
<dbReference type="EC" id="4.3.3.7" evidence="1"/>
<dbReference type="EMBL" id="CP001139">
    <property type="protein sequence ID" value="ACH65674.1"/>
    <property type="molecule type" value="Genomic_DNA"/>
</dbReference>
<dbReference type="RefSeq" id="WP_012533209.1">
    <property type="nucleotide sequence ID" value="NC_011184.1"/>
</dbReference>
<dbReference type="SMR" id="B5FGX4"/>
<dbReference type="KEGG" id="vfm:VFMJ11_2052"/>
<dbReference type="HOGENOM" id="CLU_049343_7_1_6"/>
<dbReference type="UniPathway" id="UPA00034">
    <property type="reaction ID" value="UER00017"/>
</dbReference>
<dbReference type="Proteomes" id="UP000001857">
    <property type="component" value="Chromosome I"/>
</dbReference>
<dbReference type="GO" id="GO:0005829">
    <property type="term" value="C:cytosol"/>
    <property type="evidence" value="ECO:0007669"/>
    <property type="project" value="TreeGrafter"/>
</dbReference>
<dbReference type="GO" id="GO:0008840">
    <property type="term" value="F:4-hydroxy-tetrahydrodipicolinate synthase activity"/>
    <property type="evidence" value="ECO:0007669"/>
    <property type="project" value="UniProtKB-UniRule"/>
</dbReference>
<dbReference type="GO" id="GO:0019877">
    <property type="term" value="P:diaminopimelate biosynthetic process"/>
    <property type="evidence" value="ECO:0007669"/>
    <property type="project" value="UniProtKB-UniRule"/>
</dbReference>
<dbReference type="GO" id="GO:0009089">
    <property type="term" value="P:lysine biosynthetic process via diaminopimelate"/>
    <property type="evidence" value="ECO:0007669"/>
    <property type="project" value="UniProtKB-UniRule"/>
</dbReference>
<dbReference type="CDD" id="cd00950">
    <property type="entry name" value="DHDPS"/>
    <property type="match status" value="1"/>
</dbReference>
<dbReference type="FunFam" id="3.20.20.70:FF:000046">
    <property type="entry name" value="4-hydroxy-tetrahydrodipicolinate synthase"/>
    <property type="match status" value="1"/>
</dbReference>
<dbReference type="Gene3D" id="3.20.20.70">
    <property type="entry name" value="Aldolase class I"/>
    <property type="match status" value="1"/>
</dbReference>
<dbReference type="HAMAP" id="MF_00418">
    <property type="entry name" value="DapA"/>
    <property type="match status" value="1"/>
</dbReference>
<dbReference type="InterPro" id="IPR013785">
    <property type="entry name" value="Aldolase_TIM"/>
</dbReference>
<dbReference type="InterPro" id="IPR005263">
    <property type="entry name" value="DapA"/>
</dbReference>
<dbReference type="InterPro" id="IPR002220">
    <property type="entry name" value="DapA-like"/>
</dbReference>
<dbReference type="InterPro" id="IPR020625">
    <property type="entry name" value="Schiff_base-form_aldolases_AS"/>
</dbReference>
<dbReference type="InterPro" id="IPR020624">
    <property type="entry name" value="Schiff_base-form_aldolases_CS"/>
</dbReference>
<dbReference type="NCBIfam" id="TIGR00674">
    <property type="entry name" value="dapA"/>
    <property type="match status" value="1"/>
</dbReference>
<dbReference type="PANTHER" id="PTHR12128:SF66">
    <property type="entry name" value="4-HYDROXY-2-OXOGLUTARATE ALDOLASE, MITOCHONDRIAL"/>
    <property type="match status" value="1"/>
</dbReference>
<dbReference type="PANTHER" id="PTHR12128">
    <property type="entry name" value="DIHYDRODIPICOLINATE SYNTHASE"/>
    <property type="match status" value="1"/>
</dbReference>
<dbReference type="Pfam" id="PF00701">
    <property type="entry name" value="DHDPS"/>
    <property type="match status" value="1"/>
</dbReference>
<dbReference type="PIRSF" id="PIRSF001365">
    <property type="entry name" value="DHDPS"/>
    <property type="match status" value="1"/>
</dbReference>
<dbReference type="PRINTS" id="PR00146">
    <property type="entry name" value="DHPICSNTHASE"/>
</dbReference>
<dbReference type="SMART" id="SM01130">
    <property type="entry name" value="DHDPS"/>
    <property type="match status" value="1"/>
</dbReference>
<dbReference type="SUPFAM" id="SSF51569">
    <property type="entry name" value="Aldolase"/>
    <property type="match status" value="1"/>
</dbReference>
<dbReference type="PROSITE" id="PS00665">
    <property type="entry name" value="DHDPS_1"/>
    <property type="match status" value="1"/>
</dbReference>
<dbReference type="PROSITE" id="PS00666">
    <property type="entry name" value="DHDPS_2"/>
    <property type="match status" value="1"/>
</dbReference>
<accession>B5FGX4</accession>
<gene>
    <name evidence="1" type="primary">dapA</name>
    <name type="ordered locus">VFMJ11_2052</name>
</gene>
<feature type="chain" id="PRO_1000124079" description="4-hydroxy-tetrahydrodipicolinate synthase">
    <location>
        <begin position="1"/>
        <end position="293"/>
    </location>
</feature>
<feature type="active site" description="Proton donor/acceptor" evidence="1">
    <location>
        <position position="133"/>
    </location>
</feature>
<feature type="active site" description="Schiff-base intermediate with substrate" evidence="1">
    <location>
        <position position="161"/>
    </location>
</feature>
<feature type="binding site" evidence="1">
    <location>
        <position position="45"/>
    </location>
    <ligand>
        <name>pyruvate</name>
        <dbReference type="ChEBI" id="CHEBI:15361"/>
    </ligand>
</feature>
<feature type="binding site" evidence="1">
    <location>
        <position position="203"/>
    </location>
    <ligand>
        <name>pyruvate</name>
        <dbReference type="ChEBI" id="CHEBI:15361"/>
    </ligand>
</feature>
<feature type="site" description="Part of a proton relay during catalysis" evidence="1">
    <location>
        <position position="44"/>
    </location>
</feature>
<feature type="site" description="Part of a proton relay during catalysis" evidence="1">
    <location>
        <position position="107"/>
    </location>
</feature>
<evidence type="ECO:0000255" key="1">
    <source>
        <dbReference type="HAMAP-Rule" id="MF_00418"/>
    </source>
</evidence>
<evidence type="ECO:0000305" key="2"/>
<organism>
    <name type="scientific">Aliivibrio fischeri (strain MJ11)</name>
    <name type="common">Vibrio fischeri</name>
    <dbReference type="NCBI Taxonomy" id="388396"/>
    <lineage>
        <taxon>Bacteria</taxon>
        <taxon>Pseudomonadati</taxon>
        <taxon>Pseudomonadota</taxon>
        <taxon>Gammaproteobacteria</taxon>
        <taxon>Vibrionales</taxon>
        <taxon>Vibrionaceae</taxon>
        <taxon>Aliivibrio</taxon>
    </lineage>
</organism>
<sequence length="293" mass="31339">MFSGSIVALVTPLDTDGEVDYNSLKSLVDYHIKAGTNGIVAVGTTGESATLSVEEHVKLVMKTLEFADGRIPVIAGTGANATHEAVTFSKLFHDSGVAGCLSVTPYYNKPTQEGLFQHYKAISEATDIPQILYNVPGRTAVDLLPETVARLAELDNIVALKDATGDLERVAITRELCGENFIQLSGDDATALDFVKLGGHGVISVTSNIAAKDMATMFALAAQGKFEEAEIINQRLMPLHNDLFVEANPIPVKWAAHRLGMITHSDIRLPLTELSLSAQPTVEQALKSAGLLK</sequence>
<keyword id="KW-0028">Amino-acid biosynthesis</keyword>
<keyword id="KW-0963">Cytoplasm</keyword>
<keyword id="KW-0220">Diaminopimelate biosynthesis</keyword>
<keyword id="KW-0456">Lyase</keyword>
<keyword id="KW-0457">Lysine biosynthesis</keyword>
<keyword id="KW-0704">Schiff base</keyword>
<name>DAPA_ALIFM</name>
<reference key="1">
    <citation type="submission" date="2008-08" db="EMBL/GenBank/DDBJ databases">
        <title>Complete sequence of Vibrio fischeri strain MJ11.</title>
        <authorList>
            <person name="Mandel M.J."/>
            <person name="Stabb E.V."/>
            <person name="Ruby E.G."/>
            <person name="Ferriera S."/>
            <person name="Johnson J."/>
            <person name="Kravitz S."/>
            <person name="Beeson K."/>
            <person name="Sutton G."/>
            <person name="Rogers Y.-H."/>
            <person name="Friedman R."/>
            <person name="Frazier M."/>
            <person name="Venter J.C."/>
        </authorList>
    </citation>
    <scope>NUCLEOTIDE SEQUENCE [LARGE SCALE GENOMIC DNA]</scope>
    <source>
        <strain>MJ11</strain>
    </source>
</reference>
<protein>
    <recommendedName>
        <fullName evidence="1">4-hydroxy-tetrahydrodipicolinate synthase</fullName>
        <shortName evidence="1">HTPA synthase</shortName>
        <ecNumber evidence="1">4.3.3.7</ecNumber>
    </recommendedName>
</protein>
<comment type="function">
    <text evidence="1">Catalyzes the condensation of (S)-aspartate-beta-semialdehyde [(S)-ASA] and pyruvate to 4-hydroxy-tetrahydrodipicolinate (HTPA).</text>
</comment>
<comment type="catalytic activity">
    <reaction evidence="1">
        <text>L-aspartate 4-semialdehyde + pyruvate = (2S,4S)-4-hydroxy-2,3,4,5-tetrahydrodipicolinate + H2O + H(+)</text>
        <dbReference type="Rhea" id="RHEA:34171"/>
        <dbReference type="ChEBI" id="CHEBI:15361"/>
        <dbReference type="ChEBI" id="CHEBI:15377"/>
        <dbReference type="ChEBI" id="CHEBI:15378"/>
        <dbReference type="ChEBI" id="CHEBI:67139"/>
        <dbReference type="ChEBI" id="CHEBI:537519"/>
        <dbReference type="EC" id="4.3.3.7"/>
    </reaction>
</comment>
<comment type="pathway">
    <text evidence="1">Amino-acid biosynthesis; L-lysine biosynthesis via DAP pathway; (S)-tetrahydrodipicolinate from L-aspartate: step 3/4.</text>
</comment>
<comment type="subunit">
    <text evidence="1">Homotetramer; dimer of dimers.</text>
</comment>
<comment type="subcellular location">
    <subcellularLocation>
        <location evidence="1">Cytoplasm</location>
    </subcellularLocation>
</comment>
<comment type="similarity">
    <text evidence="1">Belongs to the DapA family.</text>
</comment>
<comment type="caution">
    <text evidence="2">Was originally thought to be a dihydrodipicolinate synthase (DHDPS), catalyzing the condensation of (S)-aspartate-beta-semialdehyde [(S)-ASA] and pyruvate to dihydrodipicolinate (DHDP). However, it was shown in E.coli that the product of the enzymatic reaction is not dihydrodipicolinate but in fact (4S)-4-hydroxy-2,3,4,5-tetrahydro-(2S)-dipicolinic acid (HTPA), and that the consecutive dehydration reaction leading to DHDP is not spontaneous but catalyzed by DapB.</text>
</comment>